<proteinExistence type="inferred from homology"/>
<organism>
    <name type="scientific">Escherichia coli O139:H28 (strain E24377A / ETEC)</name>
    <dbReference type="NCBI Taxonomy" id="331111"/>
    <lineage>
        <taxon>Bacteria</taxon>
        <taxon>Pseudomonadati</taxon>
        <taxon>Pseudomonadota</taxon>
        <taxon>Gammaproteobacteria</taxon>
        <taxon>Enterobacterales</taxon>
        <taxon>Enterobacteriaceae</taxon>
        <taxon>Escherichia</taxon>
    </lineage>
</organism>
<sequence>MKTLNRRDFPGAQYPERIIQFGEGNFLRAFVDWQIDLLNEHTDLNSGVVVVRPIETSFPPSLSTQDGLYTTIIRGLNEKGEAVSDARLIRSVNREISVYSEYDEFLKLAHNPEMRFVFSNTTEAGISYHAGDKFDDAPAVSYPAKLTRLLFERFSHFNGALDKGWIIIPCELIDYNGDALRELVLRYAQEWALPEAFIQWLDQANSFCSTLVDRIVTGYPRDEVAKLEEELGYHDGFLDTAEHFYLFVIQGPKSLATELRLDKYPLNVLIVDDIKPYKERKVAILNGAHTALVPVAFQAGLDTVGEAMNDAEICAFVEKAIYEEIIPVLDLPRDELESFASAVTGRFRNPYIKHQLLSIALNGMTKFRTRILPQLLAGQKAKGTLPARLTFALAALIAFYRGERNGETYPVQDDAHWLERYQQLWSQHRDRVIGTQELVAIVLAEKDHWEQDLTQVPGLVEQVANDLDAILEKGMREAVRPLC</sequence>
<comment type="catalytic activity">
    <reaction evidence="1">
        <text>D-altronate + NAD(+) = keto-D-tagaturonate + NADH + H(+)</text>
        <dbReference type="Rhea" id="RHEA:17813"/>
        <dbReference type="ChEBI" id="CHEBI:15378"/>
        <dbReference type="ChEBI" id="CHEBI:17360"/>
        <dbReference type="ChEBI" id="CHEBI:17886"/>
        <dbReference type="ChEBI" id="CHEBI:57540"/>
        <dbReference type="ChEBI" id="CHEBI:57945"/>
        <dbReference type="EC" id="1.1.1.58"/>
    </reaction>
</comment>
<comment type="pathway">
    <text evidence="1">Carbohydrate metabolism; pentose and glucuronate interconversion.</text>
</comment>
<comment type="similarity">
    <text evidence="1">Belongs to the mannitol dehydrogenase family. UxaB subfamily.</text>
</comment>
<feature type="chain" id="PRO_1000061931" description="Altronate oxidoreductase">
    <location>
        <begin position="1"/>
        <end position="483"/>
    </location>
</feature>
<feature type="binding site" evidence="1">
    <location>
        <begin position="18"/>
        <end position="29"/>
    </location>
    <ligand>
        <name>NAD(+)</name>
        <dbReference type="ChEBI" id="CHEBI:57540"/>
    </ligand>
</feature>
<protein>
    <recommendedName>
        <fullName evidence="1">Altronate oxidoreductase</fullName>
        <ecNumber evidence="1">1.1.1.58</ecNumber>
    </recommendedName>
    <alternativeName>
        <fullName evidence="1">Tagaturonate dehydrogenase</fullName>
    </alternativeName>
    <alternativeName>
        <fullName evidence="1">Tagaturonate reductase</fullName>
    </alternativeName>
</protein>
<keyword id="KW-0520">NAD</keyword>
<keyword id="KW-0560">Oxidoreductase</keyword>
<keyword id="KW-1185">Reference proteome</keyword>
<reference key="1">
    <citation type="journal article" date="2008" name="J. Bacteriol.">
        <title>The pangenome structure of Escherichia coli: comparative genomic analysis of E. coli commensal and pathogenic isolates.</title>
        <authorList>
            <person name="Rasko D.A."/>
            <person name="Rosovitz M.J."/>
            <person name="Myers G.S.A."/>
            <person name="Mongodin E.F."/>
            <person name="Fricke W.F."/>
            <person name="Gajer P."/>
            <person name="Crabtree J."/>
            <person name="Sebaihia M."/>
            <person name="Thomson N.R."/>
            <person name="Chaudhuri R."/>
            <person name="Henderson I.R."/>
            <person name="Sperandio V."/>
            <person name="Ravel J."/>
        </authorList>
    </citation>
    <scope>NUCLEOTIDE SEQUENCE [LARGE SCALE GENOMIC DNA]</scope>
    <source>
        <strain>E24377A / ETEC</strain>
    </source>
</reference>
<accession>A7ZLX7</accession>
<gene>
    <name evidence="1" type="primary">uxaB</name>
    <name type="ordered locus">EcE24377A_1721</name>
</gene>
<dbReference type="EC" id="1.1.1.58" evidence="1"/>
<dbReference type="EMBL" id="CP000800">
    <property type="protein sequence ID" value="ABV17618.1"/>
    <property type="molecule type" value="Genomic_DNA"/>
</dbReference>
<dbReference type="RefSeq" id="WP_000854624.1">
    <property type="nucleotide sequence ID" value="NC_009801.1"/>
</dbReference>
<dbReference type="SMR" id="A7ZLX7"/>
<dbReference type="GeneID" id="75202151"/>
<dbReference type="KEGG" id="ecw:EcE24377A_1721"/>
<dbReference type="HOGENOM" id="CLU_027324_1_0_6"/>
<dbReference type="UniPathway" id="UPA00246"/>
<dbReference type="Proteomes" id="UP000001122">
    <property type="component" value="Chromosome"/>
</dbReference>
<dbReference type="GO" id="GO:0005829">
    <property type="term" value="C:cytosol"/>
    <property type="evidence" value="ECO:0007669"/>
    <property type="project" value="TreeGrafter"/>
</dbReference>
<dbReference type="GO" id="GO:0008926">
    <property type="term" value="F:mannitol-1-phosphate 5-dehydrogenase activity"/>
    <property type="evidence" value="ECO:0007669"/>
    <property type="project" value="TreeGrafter"/>
</dbReference>
<dbReference type="GO" id="GO:0009026">
    <property type="term" value="F:tagaturonate reductase activity"/>
    <property type="evidence" value="ECO:0007669"/>
    <property type="project" value="UniProtKB-UniRule"/>
</dbReference>
<dbReference type="GO" id="GO:0019698">
    <property type="term" value="P:D-galacturonate catabolic process"/>
    <property type="evidence" value="ECO:0007669"/>
    <property type="project" value="TreeGrafter"/>
</dbReference>
<dbReference type="GO" id="GO:0019592">
    <property type="term" value="P:mannitol catabolic process"/>
    <property type="evidence" value="ECO:0007669"/>
    <property type="project" value="TreeGrafter"/>
</dbReference>
<dbReference type="FunFam" id="1.10.1040.10:FF:000018">
    <property type="entry name" value="Altronate oxidoreductase"/>
    <property type="match status" value="1"/>
</dbReference>
<dbReference type="FunFam" id="3.40.50.720:FF:000153">
    <property type="entry name" value="Altronate oxidoreductase"/>
    <property type="match status" value="1"/>
</dbReference>
<dbReference type="Gene3D" id="1.10.1040.10">
    <property type="entry name" value="N-(1-d-carboxylethyl)-l-norvaline Dehydrogenase, domain 2"/>
    <property type="match status" value="1"/>
</dbReference>
<dbReference type="Gene3D" id="3.40.50.720">
    <property type="entry name" value="NAD(P)-binding Rossmann-like Domain"/>
    <property type="match status" value="1"/>
</dbReference>
<dbReference type="HAMAP" id="MF_00670">
    <property type="entry name" value="Altron_oxidoreduct"/>
    <property type="match status" value="1"/>
</dbReference>
<dbReference type="InterPro" id="IPR008927">
    <property type="entry name" value="6-PGluconate_DH-like_C_sf"/>
</dbReference>
<dbReference type="InterPro" id="IPR013328">
    <property type="entry name" value="6PGD_dom2"/>
</dbReference>
<dbReference type="InterPro" id="IPR023668">
    <property type="entry name" value="Altronate_OxRdtase"/>
</dbReference>
<dbReference type="InterPro" id="IPR013118">
    <property type="entry name" value="Mannitol_DH_C"/>
</dbReference>
<dbReference type="InterPro" id="IPR013131">
    <property type="entry name" value="Mannitol_DH_N"/>
</dbReference>
<dbReference type="InterPro" id="IPR036291">
    <property type="entry name" value="NAD(P)-bd_dom_sf"/>
</dbReference>
<dbReference type="NCBIfam" id="NF002969">
    <property type="entry name" value="PRK03643.1"/>
    <property type="match status" value="1"/>
</dbReference>
<dbReference type="PANTHER" id="PTHR30524:SF0">
    <property type="entry name" value="ALTRONATE OXIDOREDUCTASE-RELATED"/>
    <property type="match status" value="1"/>
</dbReference>
<dbReference type="PANTHER" id="PTHR30524">
    <property type="entry name" value="MANNITOL-1-PHOSPHATE 5-DEHYDROGENASE"/>
    <property type="match status" value="1"/>
</dbReference>
<dbReference type="Pfam" id="PF01232">
    <property type="entry name" value="Mannitol_dh"/>
    <property type="match status" value="1"/>
</dbReference>
<dbReference type="Pfam" id="PF08125">
    <property type="entry name" value="Mannitol_dh_C"/>
    <property type="match status" value="1"/>
</dbReference>
<dbReference type="SUPFAM" id="SSF48179">
    <property type="entry name" value="6-phosphogluconate dehydrogenase C-terminal domain-like"/>
    <property type="match status" value="1"/>
</dbReference>
<dbReference type="SUPFAM" id="SSF51735">
    <property type="entry name" value="NAD(P)-binding Rossmann-fold domains"/>
    <property type="match status" value="1"/>
</dbReference>
<name>UXAB_ECO24</name>
<evidence type="ECO:0000255" key="1">
    <source>
        <dbReference type="HAMAP-Rule" id="MF_00670"/>
    </source>
</evidence>